<keyword id="KW-0694">RNA-binding</keyword>
<keyword id="KW-0804">Transcription</keyword>
<keyword id="KW-0889">Transcription antitermination</keyword>
<keyword id="KW-0805">Transcription regulation</keyword>
<comment type="function">
    <text evidence="1">Involved in transcription antitermination. Required for transcription of ribosomal RNA (rRNA) genes. Binds specifically to the boxA antiterminator sequence of the ribosomal RNA (rrn) operons.</text>
</comment>
<comment type="similarity">
    <text evidence="1">Belongs to the NusB family.</text>
</comment>
<organism>
    <name type="scientific">Yersinia pseudotuberculosis serotype IB (strain PB1/+)</name>
    <dbReference type="NCBI Taxonomy" id="502801"/>
    <lineage>
        <taxon>Bacteria</taxon>
        <taxon>Pseudomonadati</taxon>
        <taxon>Pseudomonadota</taxon>
        <taxon>Gammaproteobacteria</taxon>
        <taxon>Enterobacterales</taxon>
        <taxon>Yersiniaceae</taxon>
        <taxon>Yersinia</taxon>
    </lineage>
</organism>
<name>NUSB_YERPB</name>
<feature type="chain" id="PRO_1000092604" description="Transcription antitermination protein NusB">
    <location>
        <begin position="1"/>
        <end position="138"/>
    </location>
</feature>
<protein>
    <recommendedName>
        <fullName evidence="1">Transcription antitermination protein NusB</fullName>
    </recommendedName>
    <alternativeName>
        <fullName evidence="1">Antitermination factor NusB</fullName>
    </alternativeName>
</protein>
<sequence length="138" mass="15506">MKPAARRRARECAVQALYSWQLSKNDIADVELQFLSEQDVKDVDIAYFRELLSGVAVNAASLDALMAPFLSRQLEELGQVERAVLRIALFELSKRDDVPYKVAINEAIELAKTFGAEDSHKFVNGVLDKVAPTVRKRK</sequence>
<evidence type="ECO:0000255" key="1">
    <source>
        <dbReference type="HAMAP-Rule" id="MF_00073"/>
    </source>
</evidence>
<reference key="1">
    <citation type="submission" date="2008-04" db="EMBL/GenBank/DDBJ databases">
        <title>Complete sequence of Yersinia pseudotuberculosis PB1/+.</title>
        <authorList>
            <person name="Copeland A."/>
            <person name="Lucas S."/>
            <person name="Lapidus A."/>
            <person name="Glavina del Rio T."/>
            <person name="Dalin E."/>
            <person name="Tice H."/>
            <person name="Bruce D."/>
            <person name="Goodwin L."/>
            <person name="Pitluck S."/>
            <person name="Munk A.C."/>
            <person name="Brettin T."/>
            <person name="Detter J.C."/>
            <person name="Han C."/>
            <person name="Tapia R."/>
            <person name="Schmutz J."/>
            <person name="Larimer F."/>
            <person name="Land M."/>
            <person name="Hauser L."/>
            <person name="Challacombe J.F."/>
            <person name="Green L."/>
            <person name="Lindler L.E."/>
            <person name="Nikolich M.P."/>
            <person name="Richardson P."/>
        </authorList>
    </citation>
    <scope>NUCLEOTIDE SEQUENCE [LARGE SCALE GENOMIC DNA]</scope>
    <source>
        <strain>PB1/+</strain>
    </source>
</reference>
<dbReference type="EMBL" id="CP001048">
    <property type="protein sequence ID" value="ACC87958.1"/>
    <property type="molecule type" value="Genomic_DNA"/>
</dbReference>
<dbReference type="RefSeq" id="WP_002208665.1">
    <property type="nucleotide sequence ID" value="NZ_CP009780.1"/>
</dbReference>
<dbReference type="SMR" id="B2K6T4"/>
<dbReference type="GeneID" id="96664444"/>
<dbReference type="KEGG" id="ypb:YPTS_0977"/>
<dbReference type="PATRIC" id="fig|502801.10.peg.318"/>
<dbReference type="GO" id="GO:0005829">
    <property type="term" value="C:cytosol"/>
    <property type="evidence" value="ECO:0007669"/>
    <property type="project" value="TreeGrafter"/>
</dbReference>
<dbReference type="GO" id="GO:0003723">
    <property type="term" value="F:RNA binding"/>
    <property type="evidence" value="ECO:0007669"/>
    <property type="project" value="UniProtKB-UniRule"/>
</dbReference>
<dbReference type="GO" id="GO:0006353">
    <property type="term" value="P:DNA-templated transcription termination"/>
    <property type="evidence" value="ECO:0007669"/>
    <property type="project" value="UniProtKB-UniRule"/>
</dbReference>
<dbReference type="GO" id="GO:0031564">
    <property type="term" value="P:transcription antitermination"/>
    <property type="evidence" value="ECO:0007669"/>
    <property type="project" value="UniProtKB-KW"/>
</dbReference>
<dbReference type="CDD" id="cd00619">
    <property type="entry name" value="Terminator_NusB"/>
    <property type="match status" value="1"/>
</dbReference>
<dbReference type="FunFam" id="1.10.940.10:FF:000001">
    <property type="entry name" value="Transcription antitermination factor NusB"/>
    <property type="match status" value="1"/>
</dbReference>
<dbReference type="Gene3D" id="1.10.940.10">
    <property type="entry name" value="NusB-like"/>
    <property type="match status" value="1"/>
</dbReference>
<dbReference type="HAMAP" id="MF_00073">
    <property type="entry name" value="NusB"/>
    <property type="match status" value="1"/>
</dbReference>
<dbReference type="InterPro" id="IPR035926">
    <property type="entry name" value="NusB-like_sf"/>
</dbReference>
<dbReference type="InterPro" id="IPR011605">
    <property type="entry name" value="NusB_fam"/>
</dbReference>
<dbReference type="InterPro" id="IPR006027">
    <property type="entry name" value="NusB_RsmB_TIM44"/>
</dbReference>
<dbReference type="NCBIfam" id="TIGR01951">
    <property type="entry name" value="nusB"/>
    <property type="match status" value="1"/>
</dbReference>
<dbReference type="PANTHER" id="PTHR11078:SF3">
    <property type="entry name" value="ANTITERMINATION NUSB DOMAIN-CONTAINING PROTEIN"/>
    <property type="match status" value="1"/>
</dbReference>
<dbReference type="PANTHER" id="PTHR11078">
    <property type="entry name" value="N UTILIZATION SUBSTANCE PROTEIN B-RELATED"/>
    <property type="match status" value="1"/>
</dbReference>
<dbReference type="Pfam" id="PF01029">
    <property type="entry name" value="NusB"/>
    <property type="match status" value="1"/>
</dbReference>
<dbReference type="SUPFAM" id="SSF48013">
    <property type="entry name" value="NusB-like"/>
    <property type="match status" value="1"/>
</dbReference>
<proteinExistence type="inferred from homology"/>
<accession>B2K6T4</accession>
<gene>
    <name evidence="1" type="primary">nusB</name>
    <name type="ordered locus">YPTS_0977</name>
</gene>